<organism>
    <name type="scientific">Escherichia coli (strain K12)</name>
    <dbReference type="NCBI Taxonomy" id="83333"/>
    <lineage>
        <taxon>Bacteria</taxon>
        <taxon>Pseudomonadati</taxon>
        <taxon>Pseudomonadota</taxon>
        <taxon>Gammaproteobacteria</taxon>
        <taxon>Enterobacterales</taxon>
        <taxon>Enterobacteriaceae</taxon>
        <taxon>Escherichia</taxon>
    </lineage>
</organism>
<evidence type="ECO:0000269" key="1">
    <source>
    </source>
</evidence>
<evidence type="ECO:0000305" key="2"/>
<evidence type="ECO:0007829" key="3">
    <source>
        <dbReference type="PDB" id="5SV0"/>
    </source>
</evidence>
<evidence type="ECO:0007829" key="4">
    <source>
        <dbReference type="PDB" id="5SV1"/>
    </source>
</evidence>
<gene>
    <name type="primary">exbB</name>
    <name type="ordered locus">b3006</name>
    <name type="ordered locus">JW2974</name>
</gene>
<keyword id="KW-0002">3D-structure</keyword>
<keyword id="KW-0080">Bacteriocin transport</keyword>
<keyword id="KW-0997">Cell inner membrane</keyword>
<keyword id="KW-1003">Cell membrane</keyword>
<keyword id="KW-0472">Membrane</keyword>
<keyword id="KW-0653">Protein transport</keyword>
<keyword id="KW-1185">Reference proteome</keyword>
<keyword id="KW-0812">Transmembrane</keyword>
<keyword id="KW-1133">Transmembrane helix</keyword>
<keyword id="KW-0813">Transport</keyword>
<accession>P0ABU7</accession>
<accession>P18783</accession>
<accession>Q2M9J2</accession>
<sequence>MGNNLMQTDLSVWGMYQHADIVVKCVMIGLILASVVTWAIFFSKSVEFFNQKRRLKREQQLLAEARSLNQANDIAADFGSKSLSLHLLNEAQNELELSEGSDDNEGIKERTSFRLERRVAAVGRQMGRGNGYLATIGAISPFVGLFGTVWGIMNSFIGIAQTQTTNLAVVAPGIAEALLATAIGLVAAIPAVVIYNVFARQIGGFKAMLGDVAAQVLLLQSRDLDLEASAAAHPVRVAQKLRAG</sequence>
<reference key="1">
    <citation type="journal article" date="1989" name="J. Bacteriol.">
        <title>Import of biopolymers into Escherichia coli: nucleotide sequences of the exbB and exbD genes are homologous to those of the tolQ and tolR genes, respectively.</title>
        <authorList>
            <person name="Eick-Helmerich K."/>
            <person name="Braun V."/>
        </authorList>
    </citation>
    <scope>NUCLEOTIDE SEQUENCE [GENOMIC DNA]</scope>
    <source>
        <strain>K12</strain>
    </source>
</reference>
<reference key="2">
    <citation type="journal article" date="1997" name="Science">
        <title>The complete genome sequence of Escherichia coli K-12.</title>
        <authorList>
            <person name="Blattner F.R."/>
            <person name="Plunkett G. III"/>
            <person name="Bloch C.A."/>
            <person name="Perna N.T."/>
            <person name="Burland V."/>
            <person name="Riley M."/>
            <person name="Collado-Vides J."/>
            <person name="Glasner J.D."/>
            <person name="Rode C.K."/>
            <person name="Mayhew G.F."/>
            <person name="Gregor J."/>
            <person name="Davis N.W."/>
            <person name="Kirkpatrick H.A."/>
            <person name="Goeden M.A."/>
            <person name="Rose D.J."/>
            <person name="Mau B."/>
            <person name="Shao Y."/>
        </authorList>
    </citation>
    <scope>NUCLEOTIDE SEQUENCE [LARGE SCALE GENOMIC DNA]</scope>
    <source>
        <strain>K12 / MG1655 / ATCC 47076</strain>
    </source>
</reference>
<reference key="3">
    <citation type="journal article" date="2006" name="Mol. Syst. Biol.">
        <title>Highly accurate genome sequences of Escherichia coli K-12 strains MG1655 and W3110.</title>
        <authorList>
            <person name="Hayashi K."/>
            <person name="Morooka N."/>
            <person name="Yamamoto Y."/>
            <person name="Fujita K."/>
            <person name="Isono K."/>
            <person name="Choi S."/>
            <person name="Ohtsubo E."/>
            <person name="Baba T."/>
            <person name="Wanner B.L."/>
            <person name="Mori H."/>
            <person name="Horiuchi T."/>
        </authorList>
    </citation>
    <scope>NUCLEOTIDE SEQUENCE [LARGE SCALE GENOMIC DNA]</scope>
    <source>
        <strain>K12 / W3110 / ATCC 27325 / DSM 5911</strain>
    </source>
</reference>
<reference key="4">
    <citation type="journal article" date="1993" name="J. Biol. Chem.">
        <title>Topology of the ExbB protein in the cytoplasmic membrane of Escherichia coli.</title>
        <authorList>
            <person name="Kampfenkel K."/>
            <person name="Braun V."/>
        </authorList>
    </citation>
    <scope>TOPOLOGY</scope>
</reference>
<reference key="5">
    <citation type="journal article" date="2005" name="Science">
        <title>Global topology analysis of the Escherichia coli inner membrane proteome.</title>
        <authorList>
            <person name="Daley D.O."/>
            <person name="Rapp M."/>
            <person name="Granseth E."/>
            <person name="Melen K."/>
            <person name="Drew D."/>
            <person name="von Heijne G."/>
        </authorList>
    </citation>
    <scope>TOPOLOGY [LARGE SCALE ANALYSIS]</scope>
    <source>
        <strain>K12 / MG1655 / ATCC 47076</strain>
    </source>
</reference>
<reference key="6">
    <citation type="journal article" date="2009" name="Mol. Cell">
        <title>Hydroxyurea induces hydroxyl radical-mediated cell death in Escherichia coli.</title>
        <authorList>
            <person name="Davies B.W."/>
            <person name="Kohanski M.A."/>
            <person name="Simmons L.A."/>
            <person name="Winkler J.A."/>
            <person name="Collins J.J."/>
            <person name="Walker G.C."/>
        </authorList>
    </citation>
    <scope>INDUCTION BY HYDROXYUREA</scope>
    <source>
        <strain>K12 / MC4100 / ATCC 35695 / DSM 6574</strain>
    </source>
</reference>
<protein>
    <recommendedName>
        <fullName>Biopolymer transport protein ExbB</fullName>
    </recommendedName>
</protein>
<feature type="chain" id="PRO_0000145799" description="Biopolymer transport protein ExbB">
    <location>
        <begin position="1"/>
        <end position="244"/>
    </location>
</feature>
<feature type="topological domain" description="Periplasmic" evidence="2">
    <location>
        <begin position="1"/>
        <end position="15"/>
    </location>
</feature>
<feature type="transmembrane region" description="Helical" evidence="2">
    <location>
        <begin position="16"/>
        <end position="39"/>
    </location>
</feature>
<feature type="topological domain" description="Cytoplasmic" evidence="2">
    <location>
        <begin position="40"/>
        <end position="127"/>
    </location>
</feature>
<feature type="transmembrane region" description="Helical" evidence="2">
    <location>
        <begin position="128"/>
        <end position="155"/>
    </location>
</feature>
<feature type="topological domain" description="Periplasmic" evidence="2">
    <location>
        <begin position="156"/>
        <end position="161"/>
    </location>
</feature>
<feature type="transmembrane region" description="Helical" evidence="2">
    <location>
        <begin position="162"/>
        <end position="194"/>
    </location>
</feature>
<feature type="topological domain" description="Cytoplasmic" evidence="2">
    <location>
        <begin position="195"/>
        <end position="244"/>
    </location>
</feature>
<feature type="sequence conflict" description="In Ref. 1; AAA23732." evidence="2" ref="1">
    <original>Q</original>
    <variation>L</variation>
    <location>
        <position position="51"/>
    </location>
</feature>
<feature type="sequence conflict" description="In Ref. 1; AAA23732." evidence="2" ref="1">
    <original>R</original>
    <variation>A</variation>
    <location>
        <position position="236"/>
    </location>
</feature>
<feature type="helix" evidence="3">
    <location>
        <begin position="12"/>
        <end position="16"/>
    </location>
</feature>
<feature type="helix" evidence="3">
    <location>
        <begin position="21"/>
        <end position="62"/>
    </location>
</feature>
<feature type="helix" evidence="3">
    <location>
        <begin position="68"/>
        <end position="75"/>
    </location>
</feature>
<feature type="turn" evidence="4">
    <location>
        <begin position="79"/>
        <end position="81"/>
    </location>
</feature>
<feature type="helix" evidence="3">
    <location>
        <begin position="83"/>
        <end position="97"/>
    </location>
</feature>
<feature type="turn" evidence="3">
    <location>
        <begin position="98"/>
        <end position="100"/>
    </location>
</feature>
<feature type="helix" evidence="3">
    <location>
        <begin position="104"/>
        <end position="107"/>
    </location>
</feature>
<feature type="helix" evidence="3">
    <location>
        <begin position="110"/>
        <end position="126"/>
    </location>
</feature>
<feature type="turn" evidence="3">
    <location>
        <begin position="127"/>
        <end position="129"/>
    </location>
</feature>
<feature type="helix" evidence="3">
    <location>
        <begin position="130"/>
        <end position="159"/>
    </location>
</feature>
<feature type="turn" evidence="3">
    <location>
        <begin position="160"/>
        <end position="163"/>
    </location>
</feature>
<feature type="helix" evidence="3">
    <location>
        <begin position="167"/>
        <end position="169"/>
    </location>
</feature>
<feature type="helix" evidence="3">
    <location>
        <begin position="171"/>
        <end position="232"/>
    </location>
</feature>
<comment type="function">
    <text>Involved in the TonB-dependent energy-dependent transport of various receptor-bound substrates. Protects ExbD from proteolytic degradation and functionally stabilizes TonB.</text>
</comment>
<comment type="subunit">
    <text>The accessory proteins ExbB and ExbD seem to form a complex with TonB.</text>
</comment>
<comment type="interaction">
    <interactant intactId="EBI-6399986">
        <id>P0ABU7</id>
    </interactant>
    <interactant intactId="EBI-6417016">
        <id>P0ABV2</id>
        <label>exbD</label>
    </interactant>
    <organismsDiffer>false</organismsDiffer>
    <experiments>7</experiments>
</comment>
<comment type="interaction">
    <interactant intactId="EBI-6399986">
        <id>P0ABU7</id>
    </interactant>
    <interactant intactId="EBI-6399993">
        <id>P02929</id>
        <label>tonB</label>
    </interactant>
    <organismsDiffer>false</organismsDiffer>
    <experiments>2</experiments>
</comment>
<comment type="subcellular location">
    <subcellularLocation>
        <location>Cell inner membrane</location>
        <topology>Multi-pass membrane protein</topology>
    </subcellularLocation>
</comment>
<comment type="induction">
    <text evidence="1">Induced 2.4-fold by hydroxyurea.</text>
</comment>
<comment type="similarity">
    <text evidence="2">Belongs to the ExbB/TolQ family.</text>
</comment>
<dbReference type="EMBL" id="M28819">
    <property type="protein sequence ID" value="AAA23732.1"/>
    <property type="molecule type" value="Genomic_DNA"/>
</dbReference>
<dbReference type="EMBL" id="U28377">
    <property type="protein sequence ID" value="AAA69173.1"/>
    <property type="molecule type" value="Genomic_DNA"/>
</dbReference>
<dbReference type="EMBL" id="U00096">
    <property type="protein sequence ID" value="AAC76042.1"/>
    <property type="molecule type" value="Genomic_DNA"/>
</dbReference>
<dbReference type="EMBL" id="AP009048">
    <property type="protein sequence ID" value="BAE77064.1"/>
    <property type="molecule type" value="Genomic_DNA"/>
</dbReference>
<dbReference type="PIR" id="D65087">
    <property type="entry name" value="BVECXB"/>
</dbReference>
<dbReference type="RefSeq" id="NP_417479.1">
    <property type="nucleotide sequence ID" value="NC_000913.3"/>
</dbReference>
<dbReference type="RefSeq" id="WP_000527844.1">
    <property type="nucleotide sequence ID" value="NZ_STEB01000001.1"/>
</dbReference>
<dbReference type="PDB" id="5SV0">
    <property type="method" value="X-ray"/>
    <property type="resolution" value="2.60 A"/>
    <property type="chains" value="A/B/C/D/E/F/G/H/I/J=1-244"/>
</dbReference>
<dbReference type="PDB" id="5SV1">
    <property type="method" value="X-ray"/>
    <property type="resolution" value="3.50 A"/>
    <property type="chains" value="A/B/C/D/E/F/G/H/I/J=1-244"/>
</dbReference>
<dbReference type="PDB" id="5ZFP">
    <property type="method" value="X-ray"/>
    <property type="resolution" value="2.84 A"/>
    <property type="chains" value="A/B/C/D/E/F/G/H/I/J/K/L=1-244"/>
</dbReference>
<dbReference type="PDB" id="5ZFU">
    <property type="method" value="EM"/>
    <property type="resolution" value="6.70 A"/>
    <property type="chains" value="A/B/C/D/E/F=1-244"/>
</dbReference>
<dbReference type="PDB" id="5ZFV">
    <property type="method" value="EM"/>
    <property type="resolution" value="7.10 A"/>
    <property type="chains" value="A/B/C/D/E=1-244"/>
</dbReference>
<dbReference type="PDB" id="6TYI">
    <property type="method" value="EM"/>
    <property type="resolution" value="3.30 A"/>
    <property type="chains" value="A/B/C/D/E=1-244"/>
</dbReference>
<dbReference type="PDBsum" id="5SV0"/>
<dbReference type="PDBsum" id="5SV1"/>
<dbReference type="PDBsum" id="5ZFP"/>
<dbReference type="PDBsum" id="5ZFU"/>
<dbReference type="PDBsum" id="5ZFV"/>
<dbReference type="PDBsum" id="6TYI"/>
<dbReference type="EMDB" id="EMD-20583"/>
<dbReference type="EMDB" id="EMD-2859"/>
<dbReference type="EMDB" id="EMD-2934"/>
<dbReference type="EMDB" id="EMD-2935"/>
<dbReference type="EMDB" id="EMD-5901"/>
<dbReference type="EMDB" id="EMD-5902"/>
<dbReference type="EMDB" id="EMD-5903"/>
<dbReference type="EMDB" id="EMD-6927"/>
<dbReference type="EMDB" id="EMD-6928"/>
<dbReference type="SMR" id="P0ABU7"/>
<dbReference type="BioGRID" id="4261412">
    <property type="interactions" value="998"/>
</dbReference>
<dbReference type="BioGRID" id="849794">
    <property type="interactions" value="2"/>
</dbReference>
<dbReference type="ComplexPortal" id="CPX-1083">
    <property type="entry name" value="Cobalamin outer membrane transporter complex"/>
</dbReference>
<dbReference type="ComplexPortal" id="CPX-2843">
    <property type="entry name" value="Ferrichrome outer membrane transporter complex"/>
</dbReference>
<dbReference type="ComplexPortal" id="CPX-3576">
    <property type="entry name" value="Ferric-citrate outer membrane transporter complex"/>
</dbReference>
<dbReference type="ComplexPortal" id="CPX-3577">
    <property type="entry name" value="Ferric-catecholate outer membrane transporter complex"/>
</dbReference>
<dbReference type="ComplexPortal" id="CPX-3578">
    <property type="entry name" value="Ferric-enterobactin outer membrane transporter complex"/>
</dbReference>
<dbReference type="ComplexPortal" id="CPX-3579">
    <property type="entry name" value="Ferric-coprogen outer membrane transporter complex"/>
</dbReference>
<dbReference type="ComplexPortal" id="CPX-3580">
    <property type="entry name" value="fiu outer membrane transporter complex"/>
</dbReference>
<dbReference type="ComplexPortal" id="CPX-3585">
    <property type="entry name" value="Uncharacterized yncD-DHBS outer membrane transporter complex"/>
</dbReference>
<dbReference type="DIP" id="DIP-47841N"/>
<dbReference type="FunCoup" id="P0ABU7">
    <property type="interactions" value="135"/>
</dbReference>
<dbReference type="IntAct" id="P0ABU7">
    <property type="interactions" value="29"/>
</dbReference>
<dbReference type="STRING" id="511145.b3006"/>
<dbReference type="TCDB" id="1.A.30.2.1">
    <property type="family name" value="the h(+)- or na(+)-translocating bacterial flagellar motor/exbbd outer membrane transport energizer (mot/exb) superfamily"/>
</dbReference>
<dbReference type="jPOST" id="P0ABU7"/>
<dbReference type="PaxDb" id="511145-b3006"/>
<dbReference type="EnsemblBacteria" id="AAC76042">
    <property type="protein sequence ID" value="AAC76042"/>
    <property type="gene ID" value="b3006"/>
</dbReference>
<dbReference type="GeneID" id="93778981"/>
<dbReference type="GeneID" id="945420"/>
<dbReference type="KEGG" id="ecj:JW2974"/>
<dbReference type="KEGG" id="eco:b3006"/>
<dbReference type="KEGG" id="ecoc:C3026_16430"/>
<dbReference type="PATRIC" id="fig|1411691.4.peg.3723"/>
<dbReference type="EchoBASE" id="EB0267"/>
<dbReference type="eggNOG" id="COG0811">
    <property type="taxonomic scope" value="Bacteria"/>
</dbReference>
<dbReference type="HOGENOM" id="CLU_053325_0_2_6"/>
<dbReference type="InParanoid" id="P0ABU7"/>
<dbReference type="OMA" id="PHMVKVG"/>
<dbReference type="OrthoDB" id="9805133at2"/>
<dbReference type="PhylomeDB" id="P0ABU7"/>
<dbReference type="BioCyc" id="EcoCyc:EG10271-MONOMER"/>
<dbReference type="BioCyc" id="MetaCyc:EG10271-MONOMER"/>
<dbReference type="PRO" id="PR:P0ABU7"/>
<dbReference type="Proteomes" id="UP000000625">
    <property type="component" value="Chromosome"/>
</dbReference>
<dbReference type="GO" id="GO:0009279">
    <property type="term" value="C:cell outer membrane"/>
    <property type="evidence" value="ECO:0000303"/>
    <property type="project" value="ComplexPortal"/>
</dbReference>
<dbReference type="GO" id="GO:0016020">
    <property type="term" value="C:membrane"/>
    <property type="evidence" value="ECO:0000303"/>
    <property type="project" value="ComplexPortal"/>
</dbReference>
<dbReference type="GO" id="GO:0005886">
    <property type="term" value="C:plasma membrane"/>
    <property type="evidence" value="ECO:0000314"/>
    <property type="project" value="EcoCyc"/>
</dbReference>
<dbReference type="GO" id="GO:0098797">
    <property type="term" value="C:plasma membrane protein complex"/>
    <property type="evidence" value="ECO:0000314"/>
    <property type="project" value="EcoCyc"/>
</dbReference>
<dbReference type="GO" id="GO:1902495">
    <property type="term" value="C:transmembrane transporter complex"/>
    <property type="evidence" value="ECO:0000303"/>
    <property type="project" value="ComplexPortal"/>
</dbReference>
<dbReference type="GO" id="GO:0031992">
    <property type="term" value="F:energy transducer activity"/>
    <property type="evidence" value="ECO:0000315"/>
    <property type="project" value="EcoCyc"/>
</dbReference>
<dbReference type="GO" id="GO:0042802">
    <property type="term" value="F:identical protein binding"/>
    <property type="evidence" value="ECO:0000314"/>
    <property type="project" value="EcoCyc"/>
</dbReference>
<dbReference type="GO" id="GO:0022857">
    <property type="term" value="F:transmembrane transporter activity"/>
    <property type="evidence" value="ECO:0007669"/>
    <property type="project" value="InterPro"/>
</dbReference>
<dbReference type="GO" id="GO:0043213">
    <property type="term" value="P:bacteriocin transport"/>
    <property type="evidence" value="ECO:0007669"/>
    <property type="project" value="UniProtKB-KW"/>
</dbReference>
<dbReference type="GO" id="GO:0015889">
    <property type="term" value="P:cobalamin transport"/>
    <property type="evidence" value="ECO:0000303"/>
    <property type="project" value="ComplexPortal"/>
</dbReference>
<dbReference type="GO" id="GO:0042928">
    <property type="term" value="P:ferrichrome import into cell"/>
    <property type="evidence" value="ECO:0000269"/>
    <property type="project" value="EcoCyc"/>
</dbReference>
<dbReference type="GO" id="GO:0006879">
    <property type="term" value="P:intracellular iron ion homeostasis"/>
    <property type="evidence" value="ECO:0000303"/>
    <property type="project" value="ComplexPortal"/>
</dbReference>
<dbReference type="GO" id="GO:0030003">
    <property type="term" value="P:intracellular monoatomic cation homeostasis"/>
    <property type="evidence" value="ECO:0000303"/>
    <property type="project" value="ComplexPortal"/>
</dbReference>
<dbReference type="GO" id="GO:0017038">
    <property type="term" value="P:protein import"/>
    <property type="evidence" value="ECO:0000318"/>
    <property type="project" value="GO_Central"/>
</dbReference>
<dbReference type="GO" id="GO:0050821">
    <property type="term" value="P:protein stabilization"/>
    <property type="evidence" value="ECO:0000315"/>
    <property type="project" value="EcoCyc"/>
</dbReference>
<dbReference type="InterPro" id="IPR050790">
    <property type="entry name" value="ExbB/TolQ_transport"/>
</dbReference>
<dbReference type="InterPro" id="IPR002898">
    <property type="entry name" value="MotA_ExbB_proton_chnl"/>
</dbReference>
<dbReference type="InterPro" id="IPR014164">
    <property type="entry name" value="TonB_ExbB_1"/>
</dbReference>
<dbReference type="NCBIfam" id="TIGR02797">
    <property type="entry name" value="exbB"/>
    <property type="match status" value="1"/>
</dbReference>
<dbReference type="NCBIfam" id="NF007722">
    <property type="entry name" value="PRK10414.1"/>
    <property type="match status" value="1"/>
</dbReference>
<dbReference type="PANTHER" id="PTHR30625:SF16">
    <property type="entry name" value="BIOPOLYMER TRANSPORT PROTEIN EXBB"/>
    <property type="match status" value="1"/>
</dbReference>
<dbReference type="PANTHER" id="PTHR30625">
    <property type="entry name" value="PROTEIN TOLQ"/>
    <property type="match status" value="1"/>
</dbReference>
<dbReference type="Pfam" id="PF01618">
    <property type="entry name" value="MotA_ExbB"/>
    <property type="match status" value="1"/>
</dbReference>
<proteinExistence type="evidence at protein level"/>
<name>EXBB_ECOLI</name>